<protein>
    <recommendedName>
        <fullName evidence="1">Protein Smg</fullName>
    </recommendedName>
</protein>
<feature type="chain" id="PRO_1000129887" description="Protein Smg">
    <location>
        <begin position="1"/>
        <end position="157"/>
    </location>
</feature>
<reference key="1">
    <citation type="journal article" date="2009" name="PLoS Genet.">
        <title>Organised genome dynamics in the Escherichia coli species results in highly diverse adaptive paths.</title>
        <authorList>
            <person name="Touchon M."/>
            <person name="Hoede C."/>
            <person name="Tenaillon O."/>
            <person name="Barbe V."/>
            <person name="Baeriswyl S."/>
            <person name="Bidet P."/>
            <person name="Bingen E."/>
            <person name="Bonacorsi S."/>
            <person name="Bouchier C."/>
            <person name="Bouvet O."/>
            <person name="Calteau A."/>
            <person name="Chiapello H."/>
            <person name="Clermont O."/>
            <person name="Cruveiller S."/>
            <person name="Danchin A."/>
            <person name="Diard M."/>
            <person name="Dossat C."/>
            <person name="Karoui M.E."/>
            <person name="Frapy E."/>
            <person name="Garry L."/>
            <person name="Ghigo J.M."/>
            <person name="Gilles A.M."/>
            <person name="Johnson J."/>
            <person name="Le Bouguenec C."/>
            <person name="Lescat M."/>
            <person name="Mangenot S."/>
            <person name="Martinez-Jehanne V."/>
            <person name="Matic I."/>
            <person name="Nassif X."/>
            <person name="Oztas S."/>
            <person name="Petit M.A."/>
            <person name="Pichon C."/>
            <person name="Rouy Z."/>
            <person name="Ruf C.S."/>
            <person name="Schneider D."/>
            <person name="Tourret J."/>
            <person name="Vacherie B."/>
            <person name="Vallenet D."/>
            <person name="Medigue C."/>
            <person name="Rocha E.P.C."/>
            <person name="Denamur E."/>
        </authorList>
    </citation>
    <scope>NUCLEOTIDE SEQUENCE [LARGE SCALE GENOMIC DNA]</scope>
    <source>
        <strain>IAI1</strain>
    </source>
</reference>
<comment type="similarity">
    <text evidence="1">Belongs to the Smg family.</text>
</comment>
<dbReference type="EMBL" id="CU928160">
    <property type="protein sequence ID" value="CAR00236.1"/>
    <property type="molecule type" value="Genomic_DNA"/>
</dbReference>
<dbReference type="RefSeq" id="WP_000460670.1">
    <property type="nucleotide sequence ID" value="NC_011741.1"/>
</dbReference>
<dbReference type="SMR" id="B7M0Z0"/>
<dbReference type="KEGG" id="ecr:ECIAI1_3434"/>
<dbReference type="HOGENOM" id="CLU_133242_0_0_6"/>
<dbReference type="HAMAP" id="MF_00598">
    <property type="entry name" value="Smg"/>
    <property type="match status" value="1"/>
</dbReference>
<dbReference type="InterPro" id="IPR007456">
    <property type="entry name" value="Smg"/>
</dbReference>
<dbReference type="NCBIfam" id="NF002897">
    <property type="entry name" value="PRK03430.1"/>
    <property type="match status" value="1"/>
</dbReference>
<dbReference type="PANTHER" id="PTHR38692">
    <property type="entry name" value="PROTEIN SMG"/>
    <property type="match status" value="1"/>
</dbReference>
<dbReference type="PANTHER" id="PTHR38692:SF1">
    <property type="entry name" value="PROTEIN SMG"/>
    <property type="match status" value="1"/>
</dbReference>
<dbReference type="Pfam" id="PF04361">
    <property type="entry name" value="DUF494"/>
    <property type="match status" value="1"/>
</dbReference>
<proteinExistence type="inferred from homology"/>
<gene>
    <name evidence="1" type="primary">smg</name>
    <name type="ordered locus">ECIAI1_3434</name>
</gene>
<evidence type="ECO:0000255" key="1">
    <source>
        <dbReference type="HAMAP-Rule" id="MF_00598"/>
    </source>
</evidence>
<accession>B7M0Z0</accession>
<sequence length="157" mass="18496">MFDVLMYLFETYIHTEAELRVDQDKLEQDLTDAGFDREDIYNALLWLEKLADYQEGLAEPMQLASDPLSMRIYTPEECERLDASCRGFLLFLEQIQVLNLETREMVIERVLALDNAEFELDDLKWVILMVLFNIPGCENAYQQMEELLFEVNEGMLH</sequence>
<name>SMG_ECO8A</name>
<organism>
    <name type="scientific">Escherichia coli O8 (strain IAI1)</name>
    <dbReference type="NCBI Taxonomy" id="585034"/>
    <lineage>
        <taxon>Bacteria</taxon>
        <taxon>Pseudomonadati</taxon>
        <taxon>Pseudomonadota</taxon>
        <taxon>Gammaproteobacteria</taxon>
        <taxon>Enterobacterales</taxon>
        <taxon>Enterobacteriaceae</taxon>
        <taxon>Escherichia</taxon>
    </lineage>
</organism>